<comment type="subcellular location">
    <subcellularLocation>
        <location evidence="1">Secreted</location>
    </subcellularLocation>
</comment>
<comment type="similarity">
    <text evidence="3">Belongs to the DEFL family.</text>
</comment>
<reference evidence="3" key="1">
    <citation type="journal article" date="1999" name="Nature">
        <title>Sequence and analysis of chromosome 2 of the plant Arabidopsis thaliana.</title>
        <authorList>
            <person name="Lin X."/>
            <person name="Kaul S."/>
            <person name="Rounsley S.D."/>
            <person name="Shea T.P."/>
            <person name="Benito M.-I."/>
            <person name="Town C.D."/>
            <person name="Fujii C.Y."/>
            <person name="Mason T.M."/>
            <person name="Bowman C.L."/>
            <person name="Barnstead M.E."/>
            <person name="Feldblyum T.V."/>
            <person name="Buell C.R."/>
            <person name="Ketchum K.A."/>
            <person name="Lee J.J."/>
            <person name="Ronning C.M."/>
            <person name="Koo H.L."/>
            <person name="Moffat K.S."/>
            <person name="Cronin L.A."/>
            <person name="Shen M."/>
            <person name="Pai G."/>
            <person name="Van Aken S."/>
            <person name="Umayam L."/>
            <person name="Tallon L.J."/>
            <person name="Gill J.E."/>
            <person name="Adams M.D."/>
            <person name="Carrera A.J."/>
            <person name="Creasy T.H."/>
            <person name="Goodman H.M."/>
            <person name="Somerville C.R."/>
            <person name="Copenhaver G.P."/>
            <person name="Preuss D."/>
            <person name="Nierman W.C."/>
            <person name="White O."/>
            <person name="Eisen J.A."/>
            <person name="Salzberg S.L."/>
            <person name="Fraser C.M."/>
            <person name="Venter J.C."/>
        </authorList>
    </citation>
    <scope>NUCLEOTIDE SEQUENCE [LARGE SCALE GENOMIC DNA]</scope>
    <source>
        <strain>cv. Columbia</strain>
    </source>
</reference>
<reference key="2">
    <citation type="journal article" date="2017" name="Plant J.">
        <title>Araport11: a complete reannotation of the Arabidopsis thaliana reference genome.</title>
        <authorList>
            <person name="Cheng C.Y."/>
            <person name="Krishnakumar V."/>
            <person name="Chan A.P."/>
            <person name="Thibaud-Nissen F."/>
            <person name="Schobel S."/>
            <person name="Town C.D."/>
        </authorList>
    </citation>
    <scope>GENOME REANNOTATION</scope>
    <source>
        <strain>cv. Columbia</strain>
    </source>
</reference>
<reference key="3">
    <citation type="journal article" date="2007" name="BMC Genomics">
        <title>Experimental validation of novel genes predicted in the un-annotated regions of the Arabidopsis genome.</title>
        <authorList>
            <person name="Moskal W.A. Jr."/>
            <person name="Wu H.C."/>
            <person name="Underwood B.A."/>
            <person name="Wang W."/>
            <person name="Town C.D."/>
            <person name="Xiao Y.-L."/>
        </authorList>
    </citation>
    <scope>NUCLEOTIDE SEQUENCE [LARGE SCALE MRNA]</scope>
    <source>
        <strain>cv. Columbia</strain>
    </source>
</reference>
<reference evidence="3" key="4">
    <citation type="journal article" date="2001" name="Plant Mol. Biol.">
        <title>Two large Arabidopsis thaliana gene families are homologous to the Brassica gene superfamily that encodes pollen coat proteins and the male component of the self-incompatibility response.</title>
        <authorList>
            <person name="Vanoosthuyse V."/>
            <person name="Miege C."/>
            <person name="Dumas C."/>
            <person name="Cock J.M."/>
        </authorList>
    </citation>
    <scope>IDENTIFICATION</scope>
</reference>
<reference key="5">
    <citation type="journal article" date="2005" name="Plant Physiol.">
        <title>Genome organization of more than 300 defensin-like genes in Arabidopsis.</title>
        <authorList>
            <person name="Silverstein K.A.T."/>
            <person name="Graham M.A."/>
            <person name="Paape T.D."/>
            <person name="VandenBosch K.A."/>
        </authorList>
    </citation>
    <scope>GENE FAMILY</scope>
</reference>
<gene>
    <name type="primary">LCR49</name>
    <name type="ordered locus">At2g33233</name>
    <name type="ORF">F25I18</name>
</gene>
<name>DEF50_ARATH</name>
<accession>P82764</accession>
<organism evidence="3">
    <name type="scientific">Arabidopsis thaliana</name>
    <name type="common">Mouse-ear cress</name>
    <dbReference type="NCBI Taxonomy" id="3702"/>
    <lineage>
        <taxon>Eukaryota</taxon>
        <taxon>Viridiplantae</taxon>
        <taxon>Streptophyta</taxon>
        <taxon>Embryophyta</taxon>
        <taxon>Tracheophyta</taxon>
        <taxon>Spermatophyta</taxon>
        <taxon>Magnoliopsida</taxon>
        <taxon>eudicotyledons</taxon>
        <taxon>Gunneridae</taxon>
        <taxon>Pentapetalae</taxon>
        <taxon>rosids</taxon>
        <taxon>malvids</taxon>
        <taxon>Brassicales</taxon>
        <taxon>Brassicaceae</taxon>
        <taxon>Camelineae</taxon>
        <taxon>Arabidopsis</taxon>
    </lineage>
</organism>
<protein>
    <recommendedName>
        <fullName>Defensin-like protein 50</fullName>
    </recommendedName>
    <alternativeName>
        <fullName>Low-molecular-weight cysteine-rich protein 49</fullName>
        <shortName>Protein LCR49</shortName>
    </alternativeName>
</protein>
<proteinExistence type="inferred from homology"/>
<evidence type="ECO:0000250" key="1"/>
<evidence type="ECO:0000255" key="2"/>
<evidence type="ECO:0000305" key="3"/>
<feature type="signal peptide" evidence="2">
    <location>
        <begin position="1"/>
        <end position="27"/>
    </location>
</feature>
<feature type="chain" id="PRO_0000017288" description="Defensin-like protein 50">
    <location>
        <begin position="28"/>
        <end position="80"/>
    </location>
</feature>
<feature type="disulfide bond" evidence="1">
    <location>
        <begin position="39"/>
        <end position="79"/>
    </location>
</feature>
<feature type="disulfide bond" evidence="1">
    <location>
        <begin position="43"/>
        <end position="66"/>
    </location>
</feature>
<feature type="disulfide bond" evidence="1">
    <location>
        <begin position="52"/>
        <end position="77"/>
    </location>
</feature>
<feature type="disulfide bond" evidence="1">
    <location>
        <begin position="56"/>
        <end position="78"/>
    </location>
</feature>
<sequence length="80" mass="8738">MGFTKIVVTFFLVVMLAVSSSSQNAMASEIKAKINGLECFNTCTPYYDDYKCNVDCLSSGYPAGDCHIVSPSQPKKCCCY</sequence>
<keyword id="KW-0929">Antimicrobial</keyword>
<keyword id="KW-1015">Disulfide bond</keyword>
<keyword id="KW-0295">Fungicide</keyword>
<keyword id="KW-0611">Plant defense</keyword>
<keyword id="KW-1185">Reference proteome</keyword>
<keyword id="KW-0964">Secreted</keyword>
<keyword id="KW-0732">Signal</keyword>
<dbReference type="EMBL" id="AC002334">
    <property type="status" value="NOT_ANNOTATED_CDS"/>
    <property type="molecule type" value="Genomic_DNA"/>
</dbReference>
<dbReference type="EMBL" id="CP002685">
    <property type="protein sequence ID" value="AEC08803.1"/>
    <property type="molecule type" value="Genomic_DNA"/>
</dbReference>
<dbReference type="EMBL" id="EF182866">
    <property type="status" value="NOT_ANNOTATED_CDS"/>
    <property type="molecule type" value="mRNA"/>
</dbReference>
<dbReference type="RefSeq" id="NP_001031470.1">
    <property type="nucleotide sequence ID" value="NM_001036393.2"/>
</dbReference>
<dbReference type="SMR" id="P82764"/>
<dbReference type="PaxDb" id="3702-AT2G33233.1"/>
<dbReference type="EnsemblPlants" id="AT2G33233.1">
    <property type="protein sequence ID" value="AT2G33233.1"/>
    <property type="gene ID" value="AT2G33233"/>
</dbReference>
<dbReference type="GeneID" id="3768712"/>
<dbReference type="Gramene" id="AT2G33233.1">
    <property type="protein sequence ID" value="AT2G33233.1"/>
    <property type="gene ID" value="AT2G33233"/>
</dbReference>
<dbReference type="KEGG" id="ath:AT2G33233"/>
<dbReference type="Araport" id="AT2G33233"/>
<dbReference type="TAIR" id="AT2G33233">
    <property type="gene designation" value="LCR49"/>
</dbReference>
<dbReference type="HOGENOM" id="CLU_165205_1_0_1"/>
<dbReference type="InParanoid" id="P82764"/>
<dbReference type="OMA" id="LEITCTM"/>
<dbReference type="OrthoDB" id="1060989at2759"/>
<dbReference type="PhylomeDB" id="P82764"/>
<dbReference type="PRO" id="PR:P82764"/>
<dbReference type="Proteomes" id="UP000006548">
    <property type="component" value="Chromosome 2"/>
</dbReference>
<dbReference type="ExpressionAtlas" id="P82764">
    <property type="expression patterns" value="baseline and differential"/>
</dbReference>
<dbReference type="GO" id="GO:0005576">
    <property type="term" value="C:extracellular region"/>
    <property type="evidence" value="ECO:0007669"/>
    <property type="project" value="UniProtKB-SubCell"/>
</dbReference>
<dbReference type="GO" id="GO:0050832">
    <property type="term" value="P:defense response to fungus"/>
    <property type="evidence" value="ECO:0007669"/>
    <property type="project" value="UniProtKB-KW"/>
</dbReference>
<dbReference type="GO" id="GO:0031640">
    <property type="term" value="P:killing of cells of another organism"/>
    <property type="evidence" value="ECO:0007669"/>
    <property type="project" value="UniProtKB-KW"/>
</dbReference>
<dbReference type="InterPro" id="IPR056373">
    <property type="entry name" value="Defensin-like_dom"/>
</dbReference>
<dbReference type="Pfam" id="PF24552">
    <property type="entry name" value="Defensin"/>
    <property type="match status" value="1"/>
</dbReference>